<gene>
    <name evidence="1" type="primary">aroC</name>
    <name type="ordered locus">RHOS4_30010</name>
    <name type="ordered locus">RSP_1389</name>
</gene>
<feature type="chain" id="PRO_0000256328" description="Chorismate synthase">
    <location>
        <begin position="1"/>
        <end position="366"/>
    </location>
</feature>
<feature type="binding site" evidence="1">
    <location>
        <position position="48"/>
    </location>
    <ligand>
        <name>NADP(+)</name>
        <dbReference type="ChEBI" id="CHEBI:58349"/>
    </ligand>
</feature>
<feature type="binding site" evidence="1">
    <location>
        <position position="54"/>
    </location>
    <ligand>
        <name>NADP(+)</name>
        <dbReference type="ChEBI" id="CHEBI:58349"/>
    </ligand>
</feature>
<feature type="binding site" evidence="1">
    <location>
        <begin position="125"/>
        <end position="127"/>
    </location>
    <ligand>
        <name>FMN</name>
        <dbReference type="ChEBI" id="CHEBI:58210"/>
    </ligand>
</feature>
<feature type="binding site" evidence="1">
    <location>
        <begin position="241"/>
        <end position="242"/>
    </location>
    <ligand>
        <name>FMN</name>
        <dbReference type="ChEBI" id="CHEBI:58210"/>
    </ligand>
</feature>
<feature type="binding site" evidence="1">
    <location>
        <position position="285"/>
    </location>
    <ligand>
        <name>FMN</name>
        <dbReference type="ChEBI" id="CHEBI:58210"/>
    </ligand>
</feature>
<feature type="binding site" evidence="1">
    <location>
        <begin position="300"/>
        <end position="304"/>
    </location>
    <ligand>
        <name>FMN</name>
        <dbReference type="ChEBI" id="CHEBI:58210"/>
    </ligand>
</feature>
<feature type="binding site" evidence="1">
    <location>
        <position position="326"/>
    </location>
    <ligand>
        <name>FMN</name>
        <dbReference type="ChEBI" id="CHEBI:58210"/>
    </ligand>
</feature>
<accession>Q3IY15</accession>
<evidence type="ECO:0000255" key="1">
    <source>
        <dbReference type="HAMAP-Rule" id="MF_00300"/>
    </source>
</evidence>
<proteinExistence type="inferred from homology"/>
<organism>
    <name type="scientific">Cereibacter sphaeroides (strain ATCC 17023 / DSM 158 / JCM 6121 / CCUG 31486 / LMG 2827 / NBRC 12203 / NCIMB 8253 / ATH 2.4.1.)</name>
    <name type="common">Rhodobacter sphaeroides</name>
    <dbReference type="NCBI Taxonomy" id="272943"/>
    <lineage>
        <taxon>Bacteria</taxon>
        <taxon>Pseudomonadati</taxon>
        <taxon>Pseudomonadota</taxon>
        <taxon>Alphaproteobacteria</taxon>
        <taxon>Rhodobacterales</taxon>
        <taxon>Paracoccaceae</taxon>
        <taxon>Cereibacter</taxon>
    </lineage>
</organism>
<sequence>MSYNTFGHIFRVTTWGESHGPALGATVDGCPPGVAIEAEAIQHWLDRRKPGQNRFTTQRQEPDAVRILSGTFEGRSTGTPIQLMIENTDQRSKDYGEIARSFRPGHADIAYHWKYGLRDYRGGGRSSARETAARVAAGGVARAALAALVPGLRIEGYMVQIGPHAIDRARFDADEIERNPFWCPDPDTAALWADYLDGLRKAHDSVGAIVEVRASGVPAGLGAPIYGKLDSDLAAAMMTINAVKGVEIGEGMAAACLTGSANADEIRMGPEGPEFLTNHAGGILGGISTGQDVVVRFAVKPTSSILTPRRSVTTDGREVEVVTKGRHDPCVGIRAVPVGEAMMACVLLDHLLLDRGQTGGLRGTIG</sequence>
<protein>
    <recommendedName>
        <fullName evidence="1">Chorismate synthase</fullName>
        <shortName evidence="1">CS</shortName>
        <ecNumber evidence="1">4.2.3.5</ecNumber>
    </recommendedName>
    <alternativeName>
        <fullName evidence="1">5-enolpyruvylshikimate-3-phosphate phospholyase</fullName>
    </alternativeName>
</protein>
<dbReference type="EC" id="4.2.3.5" evidence="1"/>
<dbReference type="EMBL" id="CP000143">
    <property type="protein sequence ID" value="ABA80569.1"/>
    <property type="molecule type" value="Genomic_DNA"/>
</dbReference>
<dbReference type="RefSeq" id="WP_002721996.1">
    <property type="nucleotide sequence ID" value="NZ_CP030271.1"/>
</dbReference>
<dbReference type="RefSeq" id="YP_354470.1">
    <property type="nucleotide sequence ID" value="NC_007493.2"/>
</dbReference>
<dbReference type="SMR" id="Q3IY15"/>
<dbReference type="STRING" id="272943.RSP_1389"/>
<dbReference type="EnsemblBacteria" id="ABA80569">
    <property type="protein sequence ID" value="ABA80569"/>
    <property type="gene ID" value="RSP_1389"/>
</dbReference>
<dbReference type="GeneID" id="67448159"/>
<dbReference type="KEGG" id="rsp:RSP_1389"/>
<dbReference type="PATRIC" id="fig|272943.9.peg.3372"/>
<dbReference type="eggNOG" id="COG0082">
    <property type="taxonomic scope" value="Bacteria"/>
</dbReference>
<dbReference type="OrthoDB" id="9771806at2"/>
<dbReference type="PhylomeDB" id="Q3IY15"/>
<dbReference type="UniPathway" id="UPA00053">
    <property type="reaction ID" value="UER00090"/>
</dbReference>
<dbReference type="Proteomes" id="UP000002703">
    <property type="component" value="Chromosome 1"/>
</dbReference>
<dbReference type="GO" id="GO:0005829">
    <property type="term" value="C:cytosol"/>
    <property type="evidence" value="ECO:0007669"/>
    <property type="project" value="TreeGrafter"/>
</dbReference>
<dbReference type="GO" id="GO:0004107">
    <property type="term" value="F:chorismate synthase activity"/>
    <property type="evidence" value="ECO:0007669"/>
    <property type="project" value="UniProtKB-UniRule"/>
</dbReference>
<dbReference type="GO" id="GO:0010181">
    <property type="term" value="F:FMN binding"/>
    <property type="evidence" value="ECO:0007669"/>
    <property type="project" value="TreeGrafter"/>
</dbReference>
<dbReference type="GO" id="GO:0008652">
    <property type="term" value="P:amino acid biosynthetic process"/>
    <property type="evidence" value="ECO:0007669"/>
    <property type="project" value="UniProtKB-KW"/>
</dbReference>
<dbReference type="GO" id="GO:0009073">
    <property type="term" value="P:aromatic amino acid family biosynthetic process"/>
    <property type="evidence" value="ECO:0007669"/>
    <property type="project" value="UniProtKB-KW"/>
</dbReference>
<dbReference type="GO" id="GO:0009423">
    <property type="term" value="P:chorismate biosynthetic process"/>
    <property type="evidence" value="ECO:0007669"/>
    <property type="project" value="UniProtKB-UniRule"/>
</dbReference>
<dbReference type="CDD" id="cd07304">
    <property type="entry name" value="Chorismate_synthase"/>
    <property type="match status" value="1"/>
</dbReference>
<dbReference type="Gene3D" id="3.60.150.10">
    <property type="entry name" value="Chorismate synthase AroC"/>
    <property type="match status" value="1"/>
</dbReference>
<dbReference type="HAMAP" id="MF_00300">
    <property type="entry name" value="Chorismate_synth"/>
    <property type="match status" value="1"/>
</dbReference>
<dbReference type="InterPro" id="IPR000453">
    <property type="entry name" value="Chorismate_synth"/>
</dbReference>
<dbReference type="InterPro" id="IPR035904">
    <property type="entry name" value="Chorismate_synth_AroC_sf"/>
</dbReference>
<dbReference type="InterPro" id="IPR020541">
    <property type="entry name" value="Chorismate_synthase_CS"/>
</dbReference>
<dbReference type="NCBIfam" id="TIGR00033">
    <property type="entry name" value="aroC"/>
    <property type="match status" value="1"/>
</dbReference>
<dbReference type="NCBIfam" id="NF003793">
    <property type="entry name" value="PRK05382.1"/>
    <property type="match status" value="1"/>
</dbReference>
<dbReference type="PANTHER" id="PTHR21085">
    <property type="entry name" value="CHORISMATE SYNTHASE"/>
    <property type="match status" value="1"/>
</dbReference>
<dbReference type="PANTHER" id="PTHR21085:SF0">
    <property type="entry name" value="CHORISMATE SYNTHASE"/>
    <property type="match status" value="1"/>
</dbReference>
<dbReference type="Pfam" id="PF01264">
    <property type="entry name" value="Chorismate_synt"/>
    <property type="match status" value="1"/>
</dbReference>
<dbReference type="PIRSF" id="PIRSF001456">
    <property type="entry name" value="Chorismate_synth"/>
    <property type="match status" value="1"/>
</dbReference>
<dbReference type="SUPFAM" id="SSF103263">
    <property type="entry name" value="Chorismate synthase, AroC"/>
    <property type="match status" value="1"/>
</dbReference>
<dbReference type="PROSITE" id="PS00787">
    <property type="entry name" value="CHORISMATE_SYNTHASE_1"/>
    <property type="match status" value="1"/>
</dbReference>
<dbReference type="PROSITE" id="PS00789">
    <property type="entry name" value="CHORISMATE_SYNTHASE_3"/>
    <property type="match status" value="1"/>
</dbReference>
<comment type="function">
    <text evidence="1">Catalyzes the anti-1,4-elimination of the C-3 phosphate and the C-6 proR hydrogen from 5-enolpyruvylshikimate-3-phosphate (EPSP) to yield chorismate, which is the branch point compound that serves as the starting substrate for the three terminal pathways of aromatic amino acid biosynthesis. This reaction introduces a second double bond into the aromatic ring system.</text>
</comment>
<comment type="catalytic activity">
    <reaction evidence="1">
        <text>5-O-(1-carboxyvinyl)-3-phosphoshikimate = chorismate + phosphate</text>
        <dbReference type="Rhea" id="RHEA:21020"/>
        <dbReference type="ChEBI" id="CHEBI:29748"/>
        <dbReference type="ChEBI" id="CHEBI:43474"/>
        <dbReference type="ChEBI" id="CHEBI:57701"/>
        <dbReference type="EC" id="4.2.3.5"/>
    </reaction>
</comment>
<comment type="cofactor">
    <cofactor evidence="1">
        <name>FMNH2</name>
        <dbReference type="ChEBI" id="CHEBI:57618"/>
    </cofactor>
    <text evidence="1">Reduced FMN (FMNH(2)).</text>
</comment>
<comment type="pathway">
    <text evidence="1">Metabolic intermediate biosynthesis; chorismate biosynthesis; chorismate from D-erythrose 4-phosphate and phosphoenolpyruvate: step 7/7.</text>
</comment>
<comment type="subunit">
    <text evidence="1">Homotetramer.</text>
</comment>
<comment type="similarity">
    <text evidence="1">Belongs to the chorismate synthase family.</text>
</comment>
<reference key="1">
    <citation type="submission" date="2005-09" db="EMBL/GenBank/DDBJ databases">
        <title>Complete sequence of chromosome 1 of Rhodobacter sphaeroides 2.4.1.</title>
        <authorList>
            <person name="Copeland A."/>
            <person name="Lucas S."/>
            <person name="Lapidus A."/>
            <person name="Barry K."/>
            <person name="Detter J.C."/>
            <person name="Glavina T."/>
            <person name="Hammon N."/>
            <person name="Israni S."/>
            <person name="Pitluck S."/>
            <person name="Richardson P."/>
            <person name="Mackenzie C."/>
            <person name="Choudhary M."/>
            <person name="Larimer F."/>
            <person name="Hauser L.J."/>
            <person name="Land M."/>
            <person name="Donohue T.J."/>
            <person name="Kaplan S."/>
        </authorList>
    </citation>
    <scope>NUCLEOTIDE SEQUENCE [LARGE SCALE GENOMIC DNA]</scope>
    <source>
        <strain>ATCC 17023 / DSM 158 / JCM 6121 / CCUG 31486 / LMG 2827 / NBRC 12203 / NCIMB 8253 / ATH 2.4.1.</strain>
    </source>
</reference>
<keyword id="KW-0028">Amino-acid biosynthesis</keyword>
<keyword id="KW-0057">Aromatic amino acid biosynthesis</keyword>
<keyword id="KW-0274">FAD</keyword>
<keyword id="KW-0285">Flavoprotein</keyword>
<keyword id="KW-0288">FMN</keyword>
<keyword id="KW-0456">Lyase</keyword>
<keyword id="KW-0521">NADP</keyword>
<keyword id="KW-1185">Reference proteome</keyword>
<name>AROC_CERS4</name>